<protein>
    <recommendedName>
        <fullName evidence="1">Large ribosomal subunit protein bL9</fullName>
    </recommendedName>
    <alternativeName>
        <fullName evidence="2">50S ribosomal protein L9</fullName>
    </alternativeName>
</protein>
<gene>
    <name evidence="1" type="primary">rplI</name>
    <name type="ordered locus">Tcr_1361</name>
</gene>
<name>RL9_HYDCU</name>
<comment type="function">
    <text evidence="1">Binds to the 23S rRNA.</text>
</comment>
<comment type="similarity">
    <text evidence="1">Belongs to the bacterial ribosomal protein bL9 family.</text>
</comment>
<evidence type="ECO:0000255" key="1">
    <source>
        <dbReference type="HAMAP-Rule" id="MF_00503"/>
    </source>
</evidence>
<evidence type="ECO:0000305" key="2"/>
<accession>Q31FW7</accession>
<sequence>MNVILLEKVQNLGSLGEQVAVKSGFARNFLIPQGKAKPATKENIAEFEARRAELEKLAAEALASAQAVYEKMNGTVVTIESVAGDEGKLFGSIGTADIADALSKAGFDVERKNIRMPEGALRYVGTFEFDVELHSDVVASITVEVKATEE</sequence>
<feature type="chain" id="PRO_0000236612" description="Large ribosomal subunit protein bL9">
    <location>
        <begin position="1"/>
        <end position="150"/>
    </location>
</feature>
<dbReference type="EMBL" id="CP000109">
    <property type="protein sequence ID" value="ABB41956.1"/>
    <property type="molecule type" value="Genomic_DNA"/>
</dbReference>
<dbReference type="SMR" id="Q31FW7"/>
<dbReference type="STRING" id="317025.Tcr_1361"/>
<dbReference type="KEGG" id="tcx:Tcr_1361"/>
<dbReference type="eggNOG" id="COG0359">
    <property type="taxonomic scope" value="Bacteria"/>
</dbReference>
<dbReference type="HOGENOM" id="CLU_078938_4_1_6"/>
<dbReference type="OrthoDB" id="9788336at2"/>
<dbReference type="GO" id="GO:1990904">
    <property type="term" value="C:ribonucleoprotein complex"/>
    <property type="evidence" value="ECO:0007669"/>
    <property type="project" value="UniProtKB-KW"/>
</dbReference>
<dbReference type="GO" id="GO:0005840">
    <property type="term" value="C:ribosome"/>
    <property type="evidence" value="ECO:0007669"/>
    <property type="project" value="UniProtKB-KW"/>
</dbReference>
<dbReference type="GO" id="GO:0019843">
    <property type="term" value="F:rRNA binding"/>
    <property type="evidence" value="ECO:0007669"/>
    <property type="project" value="UniProtKB-UniRule"/>
</dbReference>
<dbReference type="GO" id="GO:0003735">
    <property type="term" value="F:structural constituent of ribosome"/>
    <property type="evidence" value="ECO:0007669"/>
    <property type="project" value="InterPro"/>
</dbReference>
<dbReference type="GO" id="GO:0006412">
    <property type="term" value="P:translation"/>
    <property type="evidence" value="ECO:0007669"/>
    <property type="project" value="UniProtKB-UniRule"/>
</dbReference>
<dbReference type="Gene3D" id="3.10.430.100">
    <property type="entry name" value="Ribosomal protein L9, C-terminal domain"/>
    <property type="match status" value="1"/>
</dbReference>
<dbReference type="Gene3D" id="3.40.5.10">
    <property type="entry name" value="Ribosomal protein L9, N-terminal domain"/>
    <property type="match status" value="1"/>
</dbReference>
<dbReference type="HAMAP" id="MF_00503">
    <property type="entry name" value="Ribosomal_bL9"/>
    <property type="match status" value="1"/>
</dbReference>
<dbReference type="InterPro" id="IPR000244">
    <property type="entry name" value="Ribosomal_bL9"/>
</dbReference>
<dbReference type="InterPro" id="IPR009027">
    <property type="entry name" value="Ribosomal_bL9/RNase_H1_N"/>
</dbReference>
<dbReference type="InterPro" id="IPR020594">
    <property type="entry name" value="Ribosomal_bL9_bac/chp"/>
</dbReference>
<dbReference type="InterPro" id="IPR020069">
    <property type="entry name" value="Ribosomal_bL9_C"/>
</dbReference>
<dbReference type="InterPro" id="IPR036791">
    <property type="entry name" value="Ribosomal_bL9_C_sf"/>
</dbReference>
<dbReference type="InterPro" id="IPR020070">
    <property type="entry name" value="Ribosomal_bL9_N"/>
</dbReference>
<dbReference type="InterPro" id="IPR036935">
    <property type="entry name" value="Ribosomal_bL9_N_sf"/>
</dbReference>
<dbReference type="NCBIfam" id="TIGR00158">
    <property type="entry name" value="L9"/>
    <property type="match status" value="1"/>
</dbReference>
<dbReference type="PANTHER" id="PTHR21368">
    <property type="entry name" value="50S RIBOSOMAL PROTEIN L9"/>
    <property type="match status" value="1"/>
</dbReference>
<dbReference type="Pfam" id="PF03948">
    <property type="entry name" value="Ribosomal_L9_C"/>
    <property type="match status" value="1"/>
</dbReference>
<dbReference type="Pfam" id="PF01281">
    <property type="entry name" value="Ribosomal_L9_N"/>
    <property type="match status" value="1"/>
</dbReference>
<dbReference type="SUPFAM" id="SSF55658">
    <property type="entry name" value="L9 N-domain-like"/>
    <property type="match status" value="1"/>
</dbReference>
<dbReference type="SUPFAM" id="SSF55653">
    <property type="entry name" value="Ribosomal protein L9 C-domain"/>
    <property type="match status" value="1"/>
</dbReference>
<dbReference type="PROSITE" id="PS00651">
    <property type="entry name" value="RIBOSOMAL_L9"/>
    <property type="match status" value="1"/>
</dbReference>
<reference key="1">
    <citation type="journal article" date="2006" name="PLoS Biol.">
        <title>The genome of deep-sea vent chemolithoautotroph Thiomicrospira crunogena XCL-2.</title>
        <authorList>
            <person name="Scott K.M."/>
            <person name="Sievert S.M."/>
            <person name="Abril F.N."/>
            <person name="Ball L.A."/>
            <person name="Barrett C.J."/>
            <person name="Blake R.A."/>
            <person name="Boller A.J."/>
            <person name="Chain P.S.G."/>
            <person name="Clark J.A."/>
            <person name="Davis C.R."/>
            <person name="Detter C."/>
            <person name="Do K.F."/>
            <person name="Dobrinski K.P."/>
            <person name="Faza B.I."/>
            <person name="Fitzpatrick K.A."/>
            <person name="Freyermuth S.K."/>
            <person name="Harmer T.L."/>
            <person name="Hauser L.J."/>
            <person name="Huegler M."/>
            <person name="Kerfeld C.A."/>
            <person name="Klotz M.G."/>
            <person name="Kong W.W."/>
            <person name="Land M."/>
            <person name="Lapidus A."/>
            <person name="Larimer F.W."/>
            <person name="Longo D.L."/>
            <person name="Lucas S."/>
            <person name="Malfatti S.A."/>
            <person name="Massey S.E."/>
            <person name="Martin D.D."/>
            <person name="McCuddin Z."/>
            <person name="Meyer F."/>
            <person name="Moore J.L."/>
            <person name="Ocampo L.H. Jr."/>
            <person name="Paul J.H."/>
            <person name="Paulsen I.T."/>
            <person name="Reep D.K."/>
            <person name="Ren Q."/>
            <person name="Ross R.L."/>
            <person name="Sato P.Y."/>
            <person name="Thomas P."/>
            <person name="Tinkham L.E."/>
            <person name="Zeruth G.T."/>
        </authorList>
    </citation>
    <scope>NUCLEOTIDE SEQUENCE [LARGE SCALE GENOMIC DNA]</scope>
    <source>
        <strain>DSM 25203 / XCL-2</strain>
    </source>
</reference>
<proteinExistence type="inferred from homology"/>
<keyword id="KW-0687">Ribonucleoprotein</keyword>
<keyword id="KW-0689">Ribosomal protein</keyword>
<keyword id="KW-0694">RNA-binding</keyword>
<keyword id="KW-0699">rRNA-binding</keyword>
<organism>
    <name type="scientific">Hydrogenovibrio crunogenus (strain DSM 25203 / XCL-2)</name>
    <name type="common">Thiomicrospira crunogena</name>
    <dbReference type="NCBI Taxonomy" id="317025"/>
    <lineage>
        <taxon>Bacteria</taxon>
        <taxon>Pseudomonadati</taxon>
        <taxon>Pseudomonadota</taxon>
        <taxon>Gammaproteobacteria</taxon>
        <taxon>Thiotrichales</taxon>
        <taxon>Piscirickettsiaceae</taxon>
        <taxon>Hydrogenovibrio</taxon>
    </lineage>
</organism>